<protein>
    <recommendedName>
        <fullName evidence="1">Ribosomal RNA small subunit methyltransferase A</fullName>
        <ecNumber evidence="1">2.1.1.182</ecNumber>
    </recommendedName>
    <alternativeName>
        <fullName evidence="1">16S rRNA (adenine(1518)-N(6)/adenine(1519)-N(6))-dimethyltransferase</fullName>
    </alternativeName>
    <alternativeName>
        <fullName evidence="1">16S rRNA dimethyladenosine transferase</fullName>
    </alternativeName>
    <alternativeName>
        <fullName evidence="1">16S rRNA dimethylase</fullName>
    </alternativeName>
    <alternativeName>
        <fullName evidence="1">S-adenosylmethionine-6-N', N'-adenosyl(rRNA) dimethyltransferase</fullName>
    </alternativeName>
</protein>
<comment type="function">
    <text evidence="1">Specifically dimethylates two adjacent adenosines (A1518 and A1519) in the loop of a conserved hairpin near the 3'-end of 16S rRNA in the 30S particle. May play a critical role in biogenesis of 30S subunits.</text>
</comment>
<comment type="catalytic activity">
    <reaction evidence="1">
        <text>adenosine(1518)/adenosine(1519) in 16S rRNA + 4 S-adenosyl-L-methionine = N(6)-dimethyladenosine(1518)/N(6)-dimethyladenosine(1519) in 16S rRNA + 4 S-adenosyl-L-homocysteine + 4 H(+)</text>
        <dbReference type="Rhea" id="RHEA:19609"/>
        <dbReference type="Rhea" id="RHEA-COMP:10232"/>
        <dbReference type="Rhea" id="RHEA-COMP:10233"/>
        <dbReference type="ChEBI" id="CHEBI:15378"/>
        <dbReference type="ChEBI" id="CHEBI:57856"/>
        <dbReference type="ChEBI" id="CHEBI:59789"/>
        <dbReference type="ChEBI" id="CHEBI:74411"/>
        <dbReference type="ChEBI" id="CHEBI:74493"/>
        <dbReference type="EC" id="2.1.1.182"/>
    </reaction>
</comment>
<comment type="subcellular location">
    <subcellularLocation>
        <location evidence="1">Cytoplasm</location>
    </subcellularLocation>
</comment>
<comment type="similarity">
    <text evidence="1">Belongs to the class I-like SAM-binding methyltransferase superfamily. rRNA adenine N(6)-methyltransferase family. RsmA subfamily.</text>
</comment>
<proteinExistence type="inferred from homology"/>
<evidence type="ECO:0000255" key="1">
    <source>
        <dbReference type="HAMAP-Rule" id="MF_00607"/>
    </source>
</evidence>
<sequence length="287" mass="31373">MSTIDDLPPLREVIQRHDLSARKSLGQNFLLDLNLTTRIARAAGPLEDSTVIEVGPGPGGLTRALLALGAKRVIAIERDERALGALAEISAHYPGRLDIVCADAMTYDPRPLLGGARAKIVANLPYNIATPLLIGWLETDPWPPWYDCLVLMFQREVAERIVATEDDEAYGRLGVLANWRAQTKMLFDISPAAFVPPPKVTSSVVRLIPRDEPEPCNRRMLEQVTAAAFGQRRKMLRQSLKSLGVDPARLAAAAGVEPTRRAETIPVAGFVAMARELANIRGIKSEC</sequence>
<organism>
    <name type="scientific">Rhodopseudomonas palustris (strain BisA53)</name>
    <dbReference type="NCBI Taxonomy" id="316055"/>
    <lineage>
        <taxon>Bacteria</taxon>
        <taxon>Pseudomonadati</taxon>
        <taxon>Pseudomonadota</taxon>
        <taxon>Alphaproteobacteria</taxon>
        <taxon>Hyphomicrobiales</taxon>
        <taxon>Nitrobacteraceae</taxon>
        <taxon>Rhodopseudomonas</taxon>
    </lineage>
</organism>
<accession>Q07LF4</accession>
<reference key="1">
    <citation type="submission" date="2006-09" db="EMBL/GenBank/DDBJ databases">
        <title>Complete sequence of Rhodopseudomonas palustris BisA53.</title>
        <authorList>
            <consortium name="US DOE Joint Genome Institute"/>
            <person name="Copeland A."/>
            <person name="Lucas S."/>
            <person name="Lapidus A."/>
            <person name="Barry K."/>
            <person name="Detter J.C."/>
            <person name="Glavina del Rio T."/>
            <person name="Hammon N."/>
            <person name="Israni S."/>
            <person name="Dalin E."/>
            <person name="Tice H."/>
            <person name="Pitluck S."/>
            <person name="Chain P."/>
            <person name="Malfatti S."/>
            <person name="Shin M."/>
            <person name="Vergez L."/>
            <person name="Schmutz J."/>
            <person name="Larimer F."/>
            <person name="Land M."/>
            <person name="Hauser L."/>
            <person name="Pelletier D.A."/>
            <person name="Kyrpides N."/>
            <person name="Kim E."/>
            <person name="Harwood C.S."/>
            <person name="Oda Y."/>
            <person name="Richardson P."/>
        </authorList>
    </citation>
    <scope>NUCLEOTIDE SEQUENCE [LARGE SCALE GENOMIC DNA]</scope>
    <source>
        <strain>BisA53</strain>
    </source>
</reference>
<gene>
    <name evidence="1" type="primary">rsmA</name>
    <name evidence="1" type="synonym">ksgA</name>
    <name type="ordered locus">RPE_3297</name>
</gene>
<name>RSMA_RHOP5</name>
<keyword id="KW-0963">Cytoplasm</keyword>
<keyword id="KW-0489">Methyltransferase</keyword>
<keyword id="KW-0694">RNA-binding</keyword>
<keyword id="KW-0698">rRNA processing</keyword>
<keyword id="KW-0949">S-adenosyl-L-methionine</keyword>
<keyword id="KW-0808">Transferase</keyword>
<feature type="chain" id="PRO_1000056657" description="Ribosomal RNA small subunit methyltransferase A">
    <location>
        <begin position="1"/>
        <end position="287"/>
    </location>
</feature>
<feature type="binding site" evidence="1">
    <location>
        <position position="28"/>
    </location>
    <ligand>
        <name>S-adenosyl-L-methionine</name>
        <dbReference type="ChEBI" id="CHEBI:59789"/>
    </ligand>
</feature>
<feature type="binding site" evidence="1">
    <location>
        <position position="30"/>
    </location>
    <ligand>
        <name>S-adenosyl-L-methionine</name>
        <dbReference type="ChEBI" id="CHEBI:59789"/>
    </ligand>
</feature>
<feature type="binding site" evidence="1">
    <location>
        <position position="55"/>
    </location>
    <ligand>
        <name>S-adenosyl-L-methionine</name>
        <dbReference type="ChEBI" id="CHEBI:59789"/>
    </ligand>
</feature>
<feature type="binding site" evidence="1">
    <location>
        <position position="77"/>
    </location>
    <ligand>
        <name>S-adenosyl-L-methionine</name>
        <dbReference type="ChEBI" id="CHEBI:59789"/>
    </ligand>
</feature>
<feature type="binding site" evidence="1">
    <location>
        <position position="103"/>
    </location>
    <ligand>
        <name>S-adenosyl-L-methionine</name>
        <dbReference type="ChEBI" id="CHEBI:59789"/>
    </ligand>
</feature>
<feature type="binding site" evidence="1">
    <location>
        <position position="123"/>
    </location>
    <ligand>
        <name>S-adenosyl-L-methionine</name>
        <dbReference type="ChEBI" id="CHEBI:59789"/>
    </ligand>
</feature>
<dbReference type="EC" id="2.1.1.182" evidence="1"/>
<dbReference type="EMBL" id="CP000463">
    <property type="protein sequence ID" value="ABJ07230.1"/>
    <property type="molecule type" value="Genomic_DNA"/>
</dbReference>
<dbReference type="SMR" id="Q07LF4"/>
<dbReference type="STRING" id="316055.RPE_3297"/>
<dbReference type="KEGG" id="rpe:RPE_3297"/>
<dbReference type="eggNOG" id="COG0030">
    <property type="taxonomic scope" value="Bacteria"/>
</dbReference>
<dbReference type="HOGENOM" id="CLU_041220_0_1_5"/>
<dbReference type="OrthoDB" id="9814755at2"/>
<dbReference type="GO" id="GO:0005829">
    <property type="term" value="C:cytosol"/>
    <property type="evidence" value="ECO:0007669"/>
    <property type="project" value="TreeGrafter"/>
</dbReference>
<dbReference type="GO" id="GO:0052908">
    <property type="term" value="F:16S rRNA (adenine(1518)-N(6)/adenine(1519)-N(6))-dimethyltransferase activity"/>
    <property type="evidence" value="ECO:0007669"/>
    <property type="project" value="UniProtKB-EC"/>
</dbReference>
<dbReference type="GO" id="GO:0003723">
    <property type="term" value="F:RNA binding"/>
    <property type="evidence" value="ECO:0007669"/>
    <property type="project" value="UniProtKB-KW"/>
</dbReference>
<dbReference type="CDD" id="cd02440">
    <property type="entry name" value="AdoMet_MTases"/>
    <property type="match status" value="1"/>
</dbReference>
<dbReference type="FunFam" id="1.10.8.100:FF:000001">
    <property type="entry name" value="Ribosomal RNA small subunit methyltransferase A"/>
    <property type="match status" value="1"/>
</dbReference>
<dbReference type="Gene3D" id="1.10.8.100">
    <property type="entry name" value="Ribosomal RNA adenine dimethylase-like, domain 2"/>
    <property type="match status" value="1"/>
</dbReference>
<dbReference type="Gene3D" id="3.40.50.150">
    <property type="entry name" value="Vaccinia Virus protein VP39"/>
    <property type="match status" value="1"/>
</dbReference>
<dbReference type="HAMAP" id="MF_00607">
    <property type="entry name" value="16SrRNA_methyltr_A"/>
    <property type="match status" value="1"/>
</dbReference>
<dbReference type="InterPro" id="IPR001737">
    <property type="entry name" value="KsgA/Erm"/>
</dbReference>
<dbReference type="InterPro" id="IPR023165">
    <property type="entry name" value="rRNA_Ade_diMease-like_C"/>
</dbReference>
<dbReference type="InterPro" id="IPR020596">
    <property type="entry name" value="rRNA_Ade_Mease_Trfase_CS"/>
</dbReference>
<dbReference type="InterPro" id="IPR020598">
    <property type="entry name" value="rRNA_Ade_methylase_Trfase_N"/>
</dbReference>
<dbReference type="InterPro" id="IPR011530">
    <property type="entry name" value="rRNA_adenine_dimethylase"/>
</dbReference>
<dbReference type="InterPro" id="IPR029063">
    <property type="entry name" value="SAM-dependent_MTases_sf"/>
</dbReference>
<dbReference type="NCBIfam" id="TIGR00755">
    <property type="entry name" value="ksgA"/>
    <property type="match status" value="1"/>
</dbReference>
<dbReference type="PANTHER" id="PTHR11727">
    <property type="entry name" value="DIMETHYLADENOSINE TRANSFERASE"/>
    <property type="match status" value="1"/>
</dbReference>
<dbReference type="PANTHER" id="PTHR11727:SF7">
    <property type="entry name" value="DIMETHYLADENOSINE TRANSFERASE-RELATED"/>
    <property type="match status" value="1"/>
</dbReference>
<dbReference type="Pfam" id="PF00398">
    <property type="entry name" value="RrnaAD"/>
    <property type="match status" value="1"/>
</dbReference>
<dbReference type="SMART" id="SM00650">
    <property type="entry name" value="rADc"/>
    <property type="match status" value="1"/>
</dbReference>
<dbReference type="SUPFAM" id="SSF53335">
    <property type="entry name" value="S-adenosyl-L-methionine-dependent methyltransferases"/>
    <property type="match status" value="1"/>
</dbReference>
<dbReference type="PROSITE" id="PS01131">
    <property type="entry name" value="RRNA_A_DIMETH"/>
    <property type="match status" value="1"/>
</dbReference>
<dbReference type="PROSITE" id="PS51689">
    <property type="entry name" value="SAM_RNA_A_N6_MT"/>
    <property type="match status" value="1"/>
</dbReference>